<feature type="chain" id="PRO_1000132886" description="V-type ATP synthase beta chain">
    <location>
        <begin position="1"/>
        <end position="433"/>
    </location>
</feature>
<protein>
    <recommendedName>
        <fullName evidence="1">V-type ATP synthase beta chain</fullName>
    </recommendedName>
    <alternativeName>
        <fullName evidence="1">V-ATPase subunit B</fullName>
    </alternativeName>
</protein>
<accession>A1QYP2</accession>
<proteinExistence type="inferred from homology"/>
<comment type="function">
    <text evidence="1">Produces ATP from ADP in the presence of a proton gradient across the membrane. The V-type beta chain is a regulatory subunit.</text>
</comment>
<comment type="similarity">
    <text evidence="1">Belongs to the ATPase alpha/beta chains family.</text>
</comment>
<organism>
    <name type="scientific">Borrelia turicatae (strain 91E135)</name>
    <dbReference type="NCBI Taxonomy" id="314724"/>
    <lineage>
        <taxon>Bacteria</taxon>
        <taxon>Pseudomonadati</taxon>
        <taxon>Spirochaetota</taxon>
        <taxon>Spirochaetia</taxon>
        <taxon>Spirochaetales</taxon>
        <taxon>Borreliaceae</taxon>
        <taxon>Borrelia</taxon>
    </lineage>
</organism>
<gene>
    <name evidence="1" type="primary">atpB</name>
    <name type="ordered locus">BT0093</name>
</gene>
<reference key="1">
    <citation type="submission" date="2004-12" db="EMBL/GenBank/DDBJ databases">
        <title>The genome sequence of Borrelia hermsii and Borrelia turicatae: comparative analysis of two agents of endemic N. America relapsing fever.</title>
        <authorList>
            <person name="Porcella S.F."/>
            <person name="Raffel S.J."/>
            <person name="Schrumpf M.E."/>
            <person name="Montgomery B."/>
            <person name="Smith T."/>
            <person name="Schwan T.G."/>
        </authorList>
    </citation>
    <scope>NUCLEOTIDE SEQUENCE [LARGE SCALE GENOMIC DNA]</scope>
    <source>
        <strain>91E135</strain>
    </source>
</reference>
<dbReference type="EMBL" id="CP000049">
    <property type="protein sequence ID" value="AAX17434.1"/>
    <property type="molecule type" value="Genomic_DNA"/>
</dbReference>
<dbReference type="RefSeq" id="WP_011772053.1">
    <property type="nucleotide sequence ID" value="NC_008710.1"/>
</dbReference>
<dbReference type="SMR" id="A1QYP2"/>
<dbReference type="KEGG" id="btu:BT0093"/>
<dbReference type="eggNOG" id="COG1156">
    <property type="taxonomic scope" value="Bacteria"/>
</dbReference>
<dbReference type="HOGENOM" id="CLU_022916_2_0_12"/>
<dbReference type="Proteomes" id="UP000001205">
    <property type="component" value="Chromosome"/>
</dbReference>
<dbReference type="GO" id="GO:0005524">
    <property type="term" value="F:ATP binding"/>
    <property type="evidence" value="ECO:0007669"/>
    <property type="project" value="UniProtKB-UniRule"/>
</dbReference>
<dbReference type="GO" id="GO:0046933">
    <property type="term" value="F:proton-transporting ATP synthase activity, rotational mechanism"/>
    <property type="evidence" value="ECO:0007669"/>
    <property type="project" value="UniProtKB-UniRule"/>
</dbReference>
<dbReference type="GO" id="GO:0042777">
    <property type="term" value="P:proton motive force-driven plasma membrane ATP synthesis"/>
    <property type="evidence" value="ECO:0007669"/>
    <property type="project" value="UniProtKB-UniRule"/>
</dbReference>
<dbReference type="CDD" id="cd01135">
    <property type="entry name" value="V_A-ATPase_B"/>
    <property type="match status" value="1"/>
</dbReference>
<dbReference type="Gene3D" id="3.40.50.12240">
    <property type="match status" value="1"/>
</dbReference>
<dbReference type="HAMAP" id="MF_00310">
    <property type="entry name" value="ATP_synth_B_arch"/>
    <property type="match status" value="1"/>
</dbReference>
<dbReference type="InterPro" id="IPR055190">
    <property type="entry name" value="ATP-synt_VA_C"/>
</dbReference>
<dbReference type="InterPro" id="IPR004100">
    <property type="entry name" value="ATPase_F1/V1/A1_a/bsu_N"/>
</dbReference>
<dbReference type="InterPro" id="IPR000194">
    <property type="entry name" value="ATPase_F1/V1/A1_a/bsu_nucl-bd"/>
</dbReference>
<dbReference type="InterPro" id="IPR027417">
    <property type="entry name" value="P-loop_NTPase"/>
</dbReference>
<dbReference type="InterPro" id="IPR022879">
    <property type="entry name" value="V-ATPase_su_B/beta"/>
</dbReference>
<dbReference type="NCBIfam" id="NF002555">
    <property type="entry name" value="PRK02118.1"/>
    <property type="match status" value="1"/>
</dbReference>
<dbReference type="NCBIfam" id="NF003235">
    <property type="entry name" value="PRK04196.1"/>
    <property type="match status" value="1"/>
</dbReference>
<dbReference type="PANTHER" id="PTHR43389">
    <property type="entry name" value="V-TYPE PROTON ATPASE SUBUNIT B"/>
    <property type="match status" value="1"/>
</dbReference>
<dbReference type="PANTHER" id="PTHR43389:SF4">
    <property type="entry name" value="V-TYPE PROTON ATPASE SUBUNIT B"/>
    <property type="match status" value="1"/>
</dbReference>
<dbReference type="Pfam" id="PF00006">
    <property type="entry name" value="ATP-synt_ab"/>
    <property type="match status" value="1"/>
</dbReference>
<dbReference type="Pfam" id="PF02874">
    <property type="entry name" value="ATP-synt_ab_N"/>
    <property type="match status" value="1"/>
</dbReference>
<dbReference type="Pfam" id="PF22919">
    <property type="entry name" value="ATP-synt_VA_C"/>
    <property type="match status" value="1"/>
</dbReference>
<dbReference type="SUPFAM" id="SSF52540">
    <property type="entry name" value="P-loop containing nucleoside triphosphate hydrolases"/>
    <property type="match status" value="1"/>
</dbReference>
<name>VATB_BORT9</name>
<sequence>MKRVYSKIESIVGNVITVMAQNVKYGELAIVRSKDSSSLAEVIKLDRDKVSLQVYNGTIGISTADEVKFLGHPMQVTFSENLLGRIFDGAGNPKDGGPRLEDDLIEIGGPSANPAKRIVPRNMIRTGIPMIDVFNTLVESQKLPIFSVSGEPYNELLIRIALQAEVDLIILGGMGLKNDDYLTFKDYLEKGGALSRTIFFVNTANDPVVESLTVPDISLAVAEKFALQGKKVLVLLTDMTNFADAMKEIAITMEQVPSNRGYPGDLYSQLASRYEKAIDFEGAGSITILAVTTMPGDDITHPVPDNTGYITEGQYYLKGGRIEPFGSLSRLKQMVNGKTRDDHRTIMDAMIKLYASSKESIEKKAMGFNMTEWDEKLIKYSGMFESKLMDLSVNIPLEEALDLGWEILFSCFEPKETGIRTELVEKYWPQKKD</sequence>
<evidence type="ECO:0000255" key="1">
    <source>
        <dbReference type="HAMAP-Rule" id="MF_00310"/>
    </source>
</evidence>
<keyword id="KW-0066">ATP synthesis</keyword>
<keyword id="KW-0375">Hydrogen ion transport</keyword>
<keyword id="KW-0406">Ion transport</keyword>
<keyword id="KW-1185">Reference proteome</keyword>
<keyword id="KW-0813">Transport</keyword>